<proteinExistence type="predicted"/>
<name>YMP4_STRCH</name>
<sequence>ITLHRLAELVLPLGWFVPVPPGEERVTVGGAVGADLHGPNHHRAGSFARHLLAFELLTADGTVHVVDRGTPLFDATTGGLGLTGVVLTATLQLQPVATSLLLTGSARATDLDDLMARLCDADLRHTYASARVDLLARGAATGRGTVLHADHAPPEALPARLARRPLAARPQLPAPPQLPPGLVPQLTPDRPLGRRALGLLHDLRHRAAPRRRAGTLRGLAAALPVLDGGHALGRGEGTVAYRCAVGHGCEDVLRHLVRRVADEGCATRPGLLKRFGVGSPGWLSFPARGWGLSLELPARATGLTALLDELDEEVAAAGGRVCLARDSRVRPELLDAMYPLLDDFRELRAAVDPSSVFTSDLARRLGL</sequence>
<feature type="chain" id="PRO_0000205356" description="Uncharacterized protein in mprA 5'region">
    <location>
        <begin position="1" status="less than"/>
        <end position="367"/>
    </location>
</feature>
<feature type="domain" description="FAD-binding PCMH-type" evidence="1">
    <location>
        <begin position="1" status="less than"/>
        <end position="96"/>
    </location>
</feature>
<feature type="non-terminal residue">
    <location>
        <position position="1"/>
    </location>
</feature>
<evidence type="ECO:0000255" key="1">
    <source>
        <dbReference type="PROSITE-ProRule" id="PRU00718"/>
    </source>
</evidence>
<evidence type="ECO:0000305" key="2"/>
<organism>
    <name type="scientific">Streptomyces coelicolor</name>
    <dbReference type="NCBI Taxonomy" id="1902"/>
    <lineage>
        <taxon>Bacteria</taxon>
        <taxon>Bacillati</taxon>
        <taxon>Actinomycetota</taxon>
        <taxon>Actinomycetes</taxon>
        <taxon>Kitasatosporales</taxon>
        <taxon>Streptomycetaceae</taxon>
        <taxon>Streptomyces</taxon>
        <taxon>Streptomyces albidoflavus group</taxon>
    </lineage>
</organism>
<reference key="1">
    <citation type="journal article" date="1992" name="Mol. Microbiol.">
        <title>A metalloprotease gene from Streptomyces coelicolor 'Muller' and its transcriptional activator, a member of the LysR family.</title>
        <authorList>
            <person name="Dammann T."/>
            <person name="Wohlleben W."/>
        </authorList>
    </citation>
    <scope>NUCLEOTIDE SEQUENCE [GENOMIC DNA]</scope>
    <source>
        <strain>DSM 3030 / Mueller</strain>
    </source>
</reference>
<comment type="similarity">
    <text evidence="2">To M.tuberculosis Rv3790.</text>
</comment>
<dbReference type="EMBL" id="Z11929">
    <property type="protein sequence ID" value="CAA77983.1"/>
    <property type="molecule type" value="Genomic_DNA"/>
</dbReference>
<dbReference type="PIR" id="S25185">
    <property type="entry name" value="S25185"/>
</dbReference>
<dbReference type="SMR" id="P43167"/>
<dbReference type="GO" id="GO:0071949">
    <property type="term" value="F:FAD binding"/>
    <property type="evidence" value="ECO:0007669"/>
    <property type="project" value="InterPro"/>
</dbReference>
<dbReference type="GO" id="GO:0016899">
    <property type="term" value="F:oxidoreductase activity, acting on the CH-OH group of donors, oxygen as acceptor"/>
    <property type="evidence" value="ECO:0007669"/>
    <property type="project" value="InterPro"/>
</dbReference>
<dbReference type="Gene3D" id="3.30.465.10">
    <property type="match status" value="1"/>
</dbReference>
<dbReference type="Gene3D" id="1.10.45.10">
    <property type="entry name" value="Vanillyl-alcohol Oxidase, Chain A, domain 4"/>
    <property type="match status" value="1"/>
</dbReference>
<dbReference type="InterPro" id="IPR016166">
    <property type="entry name" value="FAD-bd_PCMH"/>
</dbReference>
<dbReference type="InterPro" id="IPR036318">
    <property type="entry name" value="FAD-bd_PCMH-like_sf"/>
</dbReference>
<dbReference type="InterPro" id="IPR016169">
    <property type="entry name" value="FAD-bd_PCMH_sub2"/>
</dbReference>
<dbReference type="InterPro" id="IPR010031">
    <property type="entry name" value="FAD_lactone_oxidase-like"/>
</dbReference>
<dbReference type="InterPro" id="IPR006094">
    <property type="entry name" value="Oxid_FAD_bind_N"/>
</dbReference>
<dbReference type="InterPro" id="IPR016171">
    <property type="entry name" value="Vanillyl_alc_oxidase_C-sub2"/>
</dbReference>
<dbReference type="PANTHER" id="PTHR43762:SF1">
    <property type="entry name" value="D-ARABINONO-1,4-LACTONE OXIDASE"/>
    <property type="match status" value="1"/>
</dbReference>
<dbReference type="PANTHER" id="PTHR43762">
    <property type="entry name" value="L-GULONOLACTONE OXIDASE"/>
    <property type="match status" value="1"/>
</dbReference>
<dbReference type="Pfam" id="PF01565">
    <property type="entry name" value="FAD_binding_4"/>
    <property type="match status" value="1"/>
</dbReference>
<dbReference type="SUPFAM" id="SSF56176">
    <property type="entry name" value="FAD-binding/transporter-associated domain-like"/>
    <property type="match status" value="1"/>
</dbReference>
<dbReference type="PROSITE" id="PS51387">
    <property type="entry name" value="FAD_PCMH"/>
    <property type="match status" value="1"/>
</dbReference>
<accession>P43167</accession>
<protein>
    <recommendedName>
        <fullName>Uncharacterized protein in mprA 5'region</fullName>
    </recommendedName>
    <alternativeName>
        <fullName>ORF4</fullName>
    </alternativeName>
</protein>